<reference key="1">
    <citation type="journal article" date="2004" name="Science">
        <title>The 1.2-megabase genome sequence of Mimivirus.</title>
        <authorList>
            <person name="Raoult D."/>
            <person name="Audic S."/>
            <person name="Robert C."/>
            <person name="Abergel C."/>
            <person name="Renesto P."/>
            <person name="Ogata H."/>
            <person name="La Scola B."/>
            <person name="Susan M."/>
            <person name="Claverie J.-M."/>
        </authorList>
    </citation>
    <scope>NUCLEOTIDE SEQUENCE [LARGE SCALE GENOMIC DNA]</scope>
    <source>
        <strain>Rowbotham-Bradford</strain>
    </source>
</reference>
<evidence type="ECO:0000305" key="1"/>
<protein>
    <recommendedName>
        <fullName>Uncharacterized protein L782</fullName>
    </recommendedName>
</protein>
<gene>
    <name type="ordered locus">MIMI_L782</name>
</gene>
<keyword id="KW-1185">Reference proteome</keyword>
<dbReference type="EMBL" id="AY653733">
    <property type="protein sequence ID" value="AAV51042.1"/>
    <property type="molecule type" value="Genomic_DNA"/>
</dbReference>
<dbReference type="KEGG" id="vg:9925443"/>
<dbReference type="Proteomes" id="UP000001134">
    <property type="component" value="Genome"/>
</dbReference>
<accession>Q5UPS3</accession>
<sequence length="117" mass="13972">MLASYCHVNRPFARKIPSLSAIIFESIDNDKKSKFMLDLQNRHGSLIDFKMSIEEYKMVHYSNIYVLIMLEITRFDRFLDKDDTQKLEYIAKQDDDCEFYKAIYQCNFKHGDIYAYG</sequence>
<name>YL782_MIMIV</name>
<proteinExistence type="inferred from homology"/>
<organism>
    <name type="scientific">Acanthamoeba polyphaga mimivirus</name>
    <name type="common">APMV</name>
    <dbReference type="NCBI Taxonomy" id="212035"/>
    <lineage>
        <taxon>Viruses</taxon>
        <taxon>Varidnaviria</taxon>
        <taxon>Bamfordvirae</taxon>
        <taxon>Nucleocytoviricota</taxon>
        <taxon>Megaviricetes</taxon>
        <taxon>Imitervirales</taxon>
        <taxon>Mimiviridae</taxon>
        <taxon>Megamimivirinae</taxon>
        <taxon>Mimivirus</taxon>
        <taxon>Mimivirus bradfordmassiliense</taxon>
    </lineage>
</organism>
<comment type="similarity">
    <text evidence="1">Belongs to the mimivirus R69 family.</text>
</comment>
<feature type="chain" id="PRO_0000071351" description="Uncharacterized protein L782">
    <location>
        <begin position="1"/>
        <end position="117"/>
    </location>
</feature>
<organismHost>
    <name type="scientific">Acanthamoeba polyphaga</name>
    <name type="common">Amoeba</name>
    <dbReference type="NCBI Taxonomy" id="5757"/>
</organismHost>